<reference key="1">
    <citation type="submission" date="1995-07" db="EMBL/GenBank/DDBJ databases">
        <authorList>
            <person name="Gastony G.J."/>
        </authorList>
    </citation>
    <scope>NUCLEOTIDE SEQUENCE [GENOMIC DNA]</scope>
</reference>
<geneLocation type="chloroplast"/>
<organism>
    <name type="scientific">Pellaea andromedifolia</name>
    <name type="common">Coffee fern</name>
    <name type="synonym">Pteris andromedifolia</name>
    <dbReference type="NCBI Taxonomy" id="37462"/>
    <lineage>
        <taxon>Eukaryota</taxon>
        <taxon>Viridiplantae</taxon>
        <taxon>Streptophyta</taxon>
        <taxon>Embryophyta</taxon>
        <taxon>Tracheophyta</taxon>
        <taxon>Polypodiopsida</taxon>
        <taxon>Polypodiidae</taxon>
        <taxon>Polypodiales</taxon>
        <taxon>Pteridineae</taxon>
        <taxon>Pteridaceae</taxon>
        <taxon>Cheilanthoideae</taxon>
        <taxon>Pellaea</taxon>
    </lineage>
</organism>
<evidence type="ECO:0000255" key="1">
    <source>
        <dbReference type="HAMAP-Rule" id="MF_01338"/>
    </source>
</evidence>
<protein>
    <recommendedName>
        <fullName evidence="1">Ribulose bisphosphate carboxylase large chain</fullName>
        <shortName evidence="1">RuBisCO large subunit</shortName>
        <ecNumber evidence="1">4.1.1.39</ecNumber>
    </recommendedName>
</protein>
<gene>
    <name evidence="1" type="primary">rbcL</name>
</gene>
<name>RBL_PELAN</name>
<comment type="function">
    <text evidence="1">RuBisCO catalyzes two reactions: the carboxylation of D-ribulose 1,5-bisphosphate, the primary event in carbon dioxide fixation, as well as the oxidative fragmentation of the pentose substrate in the photorespiration process. Both reactions occur simultaneously and in competition at the same active site.</text>
</comment>
<comment type="catalytic activity">
    <reaction evidence="1">
        <text>2 (2R)-3-phosphoglycerate + 2 H(+) = D-ribulose 1,5-bisphosphate + CO2 + H2O</text>
        <dbReference type="Rhea" id="RHEA:23124"/>
        <dbReference type="ChEBI" id="CHEBI:15377"/>
        <dbReference type="ChEBI" id="CHEBI:15378"/>
        <dbReference type="ChEBI" id="CHEBI:16526"/>
        <dbReference type="ChEBI" id="CHEBI:57870"/>
        <dbReference type="ChEBI" id="CHEBI:58272"/>
        <dbReference type="EC" id="4.1.1.39"/>
    </reaction>
</comment>
<comment type="catalytic activity">
    <reaction evidence="1">
        <text>D-ribulose 1,5-bisphosphate + O2 = 2-phosphoglycolate + (2R)-3-phosphoglycerate + 2 H(+)</text>
        <dbReference type="Rhea" id="RHEA:36631"/>
        <dbReference type="ChEBI" id="CHEBI:15378"/>
        <dbReference type="ChEBI" id="CHEBI:15379"/>
        <dbReference type="ChEBI" id="CHEBI:57870"/>
        <dbReference type="ChEBI" id="CHEBI:58033"/>
        <dbReference type="ChEBI" id="CHEBI:58272"/>
    </reaction>
</comment>
<comment type="cofactor">
    <cofactor evidence="1">
        <name>Mg(2+)</name>
        <dbReference type="ChEBI" id="CHEBI:18420"/>
    </cofactor>
    <text evidence="1">Binds 1 Mg(2+) ion per subunit.</text>
</comment>
<comment type="subunit">
    <text evidence="1">Heterohexadecamer of 8 large chains and 8 small chains; disulfide-linked. The disulfide link is formed within the large subunit homodimers.</text>
</comment>
<comment type="subcellular location">
    <subcellularLocation>
        <location>Plastid</location>
        <location>Chloroplast</location>
    </subcellularLocation>
</comment>
<comment type="PTM">
    <text evidence="1">The disulfide bond which can form in the large chain dimeric partners within the hexadecamer appears to be associated with oxidative stress and protein turnover.</text>
</comment>
<comment type="miscellaneous">
    <text evidence="1">The basic functional RuBisCO is composed of a large chain homodimer in a 'head-to-tail' conformation. In form I RuBisCO this homodimer is arranged in a barrel-like tetramer with the small subunits forming a tetrameric 'cap' on each end of the 'barrel'.</text>
</comment>
<comment type="similarity">
    <text evidence="1">Belongs to the RuBisCO large chain family. Type I subfamily.</text>
</comment>
<keyword id="KW-0113">Calvin cycle</keyword>
<keyword id="KW-0120">Carbon dioxide fixation</keyword>
<keyword id="KW-0150">Chloroplast</keyword>
<keyword id="KW-1015">Disulfide bond</keyword>
<keyword id="KW-0456">Lyase</keyword>
<keyword id="KW-0460">Magnesium</keyword>
<keyword id="KW-0479">Metal-binding</keyword>
<keyword id="KW-0488">Methylation</keyword>
<keyword id="KW-0503">Monooxygenase</keyword>
<keyword id="KW-0560">Oxidoreductase</keyword>
<keyword id="KW-0601">Photorespiration</keyword>
<keyword id="KW-0602">Photosynthesis</keyword>
<keyword id="KW-0934">Plastid</keyword>
<accession>Q32770</accession>
<feature type="chain" id="PRO_0000062558" description="Ribulose bisphosphate carboxylase large chain">
    <location>
        <begin position="1" status="less than"/>
        <end position="441" status="greater than"/>
    </location>
</feature>
<feature type="active site" description="Proton acceptor" evidence="1">
    <location>
        <position position="166"/>
    </location>
</feature>
<feature type="active site" description="Proton acceptor" evidence="1">
    <location>
        <position position="285"/>
    </location>
</feature>
<feature type="binding site" description="in homodimeric partner" evidence="1">
    <location>
        <position position="114"/>
    </location>
    <ligand>
        <name>substrate</name>
    </ligand>
</feature>
<feature type="binding site" evidence="1">
    <location>
        <position position="164"/>
    </location>
    <ligand>
        <name>substrate</name>
    </ligand>
</feature>
<feature type="binding site" evidence="1">
    <location>
        <position position="168"/>
    </location>
    <ligand>
        <name>substrate</name>
    </ligand>
</feature>
<feature type="binding site" description="via carbamate group" evidence="1">
    <location>
        <position position="192"/>
    </location>
    <ligand>
        <name>Mg(2+)</name>
        <dbReference type="ChEBI" id="CHEBI:18420"/>
    </ligand>
</feature>
<feature type="binding site" evidence="1">
    <location>
        <position position="194"/>
    </location>
    <ligand>
        <name>Mg(2+)</name>
        <dbReference type="ChEBI" id="CHEBI:18420"/>
    </ligand>
</feature>
<feature type="binding site" evidence="1">
    <location>
        <position position="195"/>
    </location>
    <ligand>
        <name>Mg(2+)</name>
        <dbReference type="ChEBI" id="CHEBI:18420"/>
    </ligand>
</feature>
<feature type="binding site" evidence="1">
    <location>
        <position position="286"/>
    </location>
    <ligand>
        <name>substrate</name>
    </ligand>
</feature>
<feature type="binding site" evidence="1">
    <location>
        <position position="318"/>
    </location>
    <ligand>
        <name>substrate</name>
    </ligand>
</feature>
<feature type="binding site" evidence="1">
    <location>
        <position position="370"/>
    </location>
    <ligand>
        <name>substrate</name>
    </ligand>
</feature>
<feature type="site" description="Transition state stabilizer" evidence="1">
    <location>
        <position position="325"/>
    </location>
</feature>
<feature type="modified residue" description="N6,N6,N6-trimethyllysine" evidence="1">
    <location>
        <position position="5"/>
    </location>
</feature>
<feature type="modified residue" description="N6-carboxylysine" evidence="1">
    <location>
        <position position="192"/>
    </location>
</feature>
<feature type="disulfide bond" description="Interchain; in linked form" evidence="1">
    <location>
        <position position="238"/>
    </location>
</feature>
<feature type="non-terminal residue">
    <location>
        <position position="1"/>
    </location>
</feature>
<feature type="non-terminal residue">
    <location>
        <position position="441"/>
    </location>
</feature>
<sequence length="441" mass="48781">GVGFKAGVKDYRLTYYTPEYKTKDTDILAAFRMTPQPGVPAEEAGAAVAAESSTGTWTTVWTDGLTSLDRYKGRCYDIEPVAGEENQYIAYVAYPLDLFEEGSVTNMLTSIVGNVFGFKALRALXXEDLRIPPAYSKTFMGPPHGIQVERDKLNKYGRPLLGCTIKPKLGLSAKNYGRAVYECLRGGLDFTKDDENVNSQPFMRWRDRFLFVAEALFKSQAETGEIKGHYLNATAGTCEEMLKRAVFARELGVPIVMHDYLTGGFTANTSLAFYCRDNGLLLHIHRAMHAVIDRQKNHGMHFRVLAKALRMSGGDHIHAGTVVGKLEGEREVTLGFVDLLRDDYIEKDRSRGIYFTQDWVSMPGVFPVASGGIHVWHMPALTEIFGDDSVLQFGGGTLGHPWGNAPGAVANRVALEACVQARNEGRDLAREGNEIIREACK</sequence>
<dbReference type="EC" id="4.1.1.39" evidence="1"/>
<dbReference type="EMBL" id="U19501">
    <property type="protein sequence ID" value="AAA69473.1"/>
    <property type="molecule type" value="Genomic_DNA"/>
</dbReference>
<dbReference type="GO" id="GO:0009507">
    <property type="term" value="C:chloroplast"/>
    <property type="evidence" value="ECO:0007669"/>
    <property type="project" value="UniProtKB-SubCell"/>
</dbReference>
<dbReference type="GO" id="GO:0000287">
    <property type="term" value="F:magnesium ion binding"/>
    <property type="evidence" value="ECO:0007669"/>
    <property type="project" value="InterPro"/>
</dbReference>
<dbReference type="GO" id="GO:0004497">
    <property type="term" value="F:monooxygenase activity"/>
    <property type="evidence" value="ECO:0007669"/>
    <property type="project" value="UniProtKB-KW"/>
</dbReference>
<dbReference type="GO" id="GO:0016984">
    <property type="term" value="F:ribulose-bisphosphate carboxylase activity"/>
    <property type="evidence" value="ECO:0007669"/>
    <property type="project" value="UniProtKB-EC"/>
</dbReference>
<dbReference type="GO" id="GO:0009853">
    <property type="term" value="P:photorespiration"/>
    <property type="evidence" value="ECO:0007669"/>
    <property type="project" value="UniProtKB-KW"/>
</dbReference>
<dbReference type="GO" id="GO:0019253">
    <property type="term" value="P:reductive pentose-phosphate cycle"/>
    <property type="evidence" value="ECO:0007669"/>
    <property type="project" value="UniProtKB-KW"/>
</dbReference>
<dbReference type="CDD" id="cd08212">
    <property type="entry name" value="RuBisCO_large_I"/>
    <property type="match status" value="1"/>
</dbReference>
<dbReference type="FunFam" id="3.20.20.110:FF:000003">
    <property type="entry name" value="Ribulose bisphosphate carboxylase large chain"/>
    <property type="match status" value="1"/>
</dbReference>
<dbReference type="FunFam" id="3.30.70.150:FF:000001">
    <property type="entry name" value="Ribulose bisphosphate carboxylase large chain"/>
    <property type="match status" value="1"/>
</dbReference>
<dbReference type="Gene3D" id="3.20.20.110">
    <property type="entry name" value="Ribulose bisphosphate carboxylase, large subunit, C-terminal domain"/>
    <property type="match status" value="1"/>
</dbReference>
<dbReference type="Gene3D" id="3.30.70.150">
    <property type="entry name" value="RuBisCO large subunit, N-terminal domain"/>
    <property type="match status" value="1"/>
</dbReference>
<dbReference type="HAMAP" id="MF_01338">
    <property type="entry name" value="RuBisCO_L_type1"/>
    <property type="match status" value="1"/>
</dbReference>
<dbReference type="InterPro" id="IPR033966">
    <property type="entry name" value="RuBisCO"/>
</dbReference>
<dbReference type="InterPro" id="IPR020878">
    <property type="entry name" value="RuBisCo_large_chain_AS"/>
</dbReference>
<dbReference type="InterPro" id="IPR000685">
    <property type="entry name" value="RuBisCO_lsu_C"/>
</dbReference>
<dbReference type="InterPro" id="IPR036376">
    <property type="entry name" value="RuBisCO_lsu_C_sf"/>
</dbReference>
<dbReference type="InterPro" id="IPR017443">
    <property type="entry name" value="RuBisCO_lsu_fd_N"/>
</dbReference>
<dbReference type="InterPro" id="IPR036422">
    <property type="entry name" value="RuBisCO_lsu_N_sf"/>
</dbReference>
<dbReference type="InterPro" id="IPR020888">
    <property type="entry name" value="RuBisCO_lsuI"/>
</dbReference>
<dbReference type="NCBIfam" id="NF003252">
    <property type="entry name" value="PRK04208.1"/>
    <property type="match status" value="1"/>
</dbReference>
<dbReference type="PANTHER" id="PTHR42704">
    <property type="entry name" value="RIBULOSE BISPHOSPHATE CARBOXYLASE"/>
    <property type="match status" value="1"/>
</dbReference>
<dbReference type="PANTHER" id="PTHR42704:SF17">
    <property type="entry name" value="RIBULOSE BISPHOSPHATE CARBOXYLASE LARGE CHAIN"/>
    <property type="match status" value="1"/>
</dbReference>
<dbReference type="Pfam" id="PF00016">
    <property type="entry name" value="RuBisCO_large"/>
    <property type="match status" value="1"/>
</dbReference>
<dbReference type="Pfam" id="PF02788">
    <property type="entry name" value="RuBisCO_large_N"/>
    <property type="match status" value="1"/>
</dbReference>
<dbReference type="SFLD" id="SFLDG01052">
    <property type="entry name" value="RuBisCO"/>
    <property type="match status" value="1"/>
</dbReference>
<dbReference type="SFLD" id="SFLDS00014">
    <property type="entry name" value="RuBisCO"/>
    <property type="match status" value="1"/>
</dbReference>
<dbReference type="SFLD" id="SFLDG00301">
    <property type="entry name" value="RuBisCO-like_proteins"/>
    <property type="match status" value="1"/>
</dbReference>
<dbReference type="SUPFAM" id="SSF51649">
    <property type="entry name" value="RuBisCo, C-terminal domain"/>
    <property type="match status" value="1"/>
</dbReference>
<dbReference type="SUPFAM" id="SSF54966">
    <property type="entry name" value="RuBisCO, large subunit, small (N-terminal) domain"/>
    <property type="match status" value="1"/>
</dbReference>
<dbReference type="PROSITE" id="PS00157">
    <property type="entry name" value="RUBISCO_LARGE"/>
    <property type="match status" value="1"/>
</dbReference>
<proteinExistence type="inferred from homology"/>